<proteinExistence type="inferred from homology"/>
<organism>
    <name type="scientific">Nautilia profundicola (strain ATCC BAA-1463 / DSM 18972 / AmH)</name>
    <dbReference type="NCBI Taxonomy" id="598659"/>
    <lineage>
        <taxon>Bacteria</taxon>
        <taxon>Pseudomonadati</taxon>
        <taxon>Campylobacterota</taxon>
        <taxon>Epsilonproteobacteria</taxon>
        <taxon>Nautiliales</taxon>
        <taxon>Nautiliaceae</taxon>
        <taxon>Nautilia</taxon>
    </lineage>
</organism>
<feature type="chain" id="PRO_0000394793" description="UPF0763 protein NAMH_0545">
    <location>
        <begin position="1"/>
        <end position="125"/>
    </location>
</feature>
<evidence type="ECO:0000255" key="1">
    <source>
        <dbReference type="HAMAP-Rule" id="MF_02110"/>
    </source>
</evidence>
<reference key="1">
    <citation type="journal article" date="2009" name="PLoS Genet.">
        <title>Adaptations to submarine hydrothermal environments exemplified by the genome of Nautilia profundicola.</title>
        <authorList>
            <person name="Campbell B.J."/>
            <person name="Smith J.L."/>
            <person name="Hanson T.E."/>
            <person name="Klotz M.G."/>
            <person name="Stein L.Y."/>
            <person name="Lee C.K."/>
            <person name="Wu D."/>
            <person name="Robinson J.M."/>
            <person name="Khouri H.M."/>
            <person name="Eisen J.A."/>
            <person name="Cary S.C."/>
        </authorList>
    </citation>
    <scope>NUCLEOTIDE SEQUENCE [LARGE SCALE GENOMIC DNA]</scope>
    <source>
        <strain>ATCC BAA-1463 / DSM 18972 / AmH</strain>
    </source>
</reference>
<sequence length="125" mass="14800">MAEKIAKKLNINEKTVVECKEFEVIEGNLDNSLWIMHINNEFKIVLDVEEYMKLMETMKNVMKENFELKLEKAILSEFPVDYDDVKAVVLEEMKRDENASISEILNKVKLEHPNLFYNLDLEKIF</sequence>
<protein>
    <recommendedName>
        <fullName evidence="1">UPF0763 protein NAMH_0545</fullName>
    </recommendedName>
</protein>
<gene>
    <name type="ordered locus">NAMH_0545</name>
</gene>
<comment type="similarity">
    <text evidence="1">Belongs to the UPF0763 family.</text>
</comment>
<dbReference type="EMBL" id="CP001279">
    <property type="protein sequence ID" value="ACM92560.1"/>
    <property type="molecule type" value="Genomic_DNA"/>
</dbReference>
<dbReference type="RefSeq" id="WP_012663931.1">
    <property type="nucleotide sequence ID" value="NC_012115.1"/>
</dbReference>
<dbReference type="STRING" id="598659.NAMH_0545"/>
<dbReference type="KEGG" id="nam:NAMH_0545"/>
<dbReference type="HOGENOM" id="CLU_1990250_0_0_7"/>
<dbReference type="OrthoDB" id="5324700at2"/>
<dbReference type="Proteomes" id="UP000000448">
    <property type="component" value="Chromosome"/>
</dbReference>
<dbReference type="HAMAP" id="MF_02110">
    <property type="entry name" value="UPF0763"/>
    <property type="match status" value="1"/>
</dbReference>
<dbReference type="InterPro" id="IPR019724">
    <property type="entry name" value="UPF0763"/>
</dbReference>
<dbReference type="Pfam" id="PF10788">
    <property type="entry name" value="DUF2603"/>
    <property type="match status" value="1"/>
</dbReference>
<accession>B9L8K3</accession>
<name>Y545_NAUPA</name>